<accession>B7M2J3</accession>
<feature type="chain" id="PRO_1000130478" description="Glucose-1-phosphate adenylyltransferase">
    <location>
        <begin position="1"/>
        <end position="431"/>
    </location>
</feature>
<feature type="binding site" evidence="1">
    <location>
        <position position="39"/>
    </location>
    <ligand>
        <name>beta-D-fructose 1,6-bisphosphate</name>
        <dbReference type="ChEBI" id="CHEBI:32966"/>
    </ligand>
</feature>
<feature type="binding site" evidence="1">
    <location>
        <position position="40"/>
    </location>
    <ligand>
        <name>AMP</name>
        <dbReference type="ChEBI" id="CHEBI:456215"/>
    </ligand>
</feature>
<feature type="binding site" evidence="1">
    <location>
        <position position="46"/>
    </location>
    <ligand>
        <name>AMP</name>
        <dbReference type="ChEBI" id="CHEBI:456215"/>
    </ligand>
</feature>
<feature type="binding site" evidence="1">
    <location>
        <position position="52"/>
    </location>
    <ligand>
        <name>AMP</name>
        <dbReference type="ChEBI" id="CHEBI:456215"/>
    </ligand>
</feature>
<feature type="binding site" evidence="1">
    <location>
        <position position="114"/>
    </location>
    <ligand>
        <name>alpha-D-glucose 1-phosphate</name>
        <dbReference type="ChEBI" id="CHEBI:58601"/>
    </ligand>
</feature>
<feature type="binding site" evidence="1">
    <location>
        <position position="130"/>
    </location>
    <ligand>
        <name>AMP</name>
        <dbReference type="ChEBI" id="CHEBI:456215"/>
    </ligand>
</feature>
<feature type="binding site" evidence="1">
    <location>
        <position position="179"/>
    </location>
    <ligand>
        <name>alpha-D-glucose 1-phosphate</name>
        <dbReference type="ChEBI" id="CHEBI:58601"/>
    </ligand>
</feature>
<feature type="binding site" evidence="1">
    <location>
        <begin position="194"/>
        <end position="195"/>
    </location>
    <ligand>
        <name>alpha-D-glucose 1-phosphate</name>
        <dbReference type="ChEBI" id="CHEBI:58601"/>
    </ligand>
</feature>
<feature type="binding site" evidence="1">
    <location>
        <position position="212"/>
    </location>
    <ligand>
        <name>alpha-D-glucose 1-phosphate</name>
        <dbReference type="ChEBI" id="CHEBI:58601"/>
    </ligand>
</feature>
<feature type="binding site" evidence="1">
    <location>
        <position position="370"/>
    </location>
    <ligand>
        <name>AMP</name>
        <dbReference type="ChEBI" id="CHEBI:456215"/>
    </ligand>
</feature>
<feature type="binding site" evidence="1">
    <location>
        <position position="386"/>
    </location>
    <ligand>
        <name>AMP</name>
        <dbReference type="ChEBI" id="CHEBI:456215"/>
    </ligand>
</feature>
<feature type="binding site" evidence="1">
    <location>
        <begin position="419"/>
        <end position="423"/>
    </location>
    <ligand>
        <name>beta-D-fructose 1,6-bisphosphate</name>
        <dbReference type="ChEBI" id="CHEBI:32966"/>
    </ligand>
</feature>
<feature type="binding site" evidence="1">
    <location>
        <begin position="429"/>
        <end position="431"/>
    </location>
    <ligand>
        <name>beta-D-fructose 1,6-bisphosphate</name>
        <dbReference type="ChEBI" id="CHEBI:32966"/>
    </ligand>
</feature>
<feature type="site" description="Could play a key role in the communication between the regulatory and the substrate sites" evidence="1">
    <location>
        <position position="74"/>
    </location>
</feature>
<feature type="site" description="Could play a key role in the communication between the regulatory and the substrate sites" evidence="1">
    <location>
        <position position="113"/>
    </location>
</feature>
<organism>
    <name type="scientific">Escherichia coli O8 (strain IAI1)</name>
    <dbReference type="NCBI Taxonomy" id="585034"/>
    <lineage>
        <taxon>Bacteria</taxon>
        <taxon>Pseudomonadati</taxon>
        <taxon>Pseudomonadota</taxon>
        <taxon>Gammaproteobacteria</taxon>
        <taxon>Enterobacterales</taxon>
        <taxon>Enterobacteriaceae</taxon>
        <taxon>Escherichia</taxon>
    </lineage>
</organism>
<proteinExistence type="inferred from homology"/>
<protein>
    <recommendedName>
        <fullName evidence="1">Glucose-1-phosphate adenylyltransferase</fullName>
        <ecNumber evidence="1">2.7.7.27</ecNumber>
    </recommendedName>
    <alternativeName>
        <fullName evidence="1">ADP-glucose pyrophosphorylase</fullName>
        <shortName evidence="1">ADPGlc PPase</shortName>
    </alternativeName>
    <alternativeName>
        <fullName evidence="1">ADP-glucose synthase</fullName>
    </alternativeName>
</protein>
<gene>
    <name evidence="1" type="primary">glgC</name>
    <name type="ordered locus">ECIAI1_3576</name>
</gene>
<evidence type="ECO:0000255" key="1">
    <source>
        <dbReference type="HAMAP-Rule" id="MF_00624"/>
    </source>
</evidence>
<dbReference type="EC" id="2.7.7.27" evidence="1"/>
<dbReference type="EMBL" id="CU928160">
    <property type="protein sequence ID" value="CAR00375.1"/>
    <property type="molecule type" value="Genomic_DNA"/>
</dbReference>
<dbReference type="RefSeq" id="WP_000253975.1">
    <property type="nucleotide sequence ID" value="NC_011741.1"/>
</dbReference>
<dbReference type="SMR" id="B7M2J3"/>
<dbReference type="GeneID" id="93778559"/>
<dbReference type="KEGG" id="ecr:ECIAI1_3576"/>
<dbReference type="HOGENOM" id="CLU_029499_14_1_6"/>
<dbReference type="UniPathway" id="UPA00164"/>
<dbReference type="GO" id="GO:0005524">
    <property type="term" value="F:ATP binding"/>
    <property type="evidence" value="ECO:0007669"/>
    <property type="project" value="UniProtKB-KW"/>
</dbReference>
<dbReference type="GO" id="GO:0008878">
    <property type="term" value="F:glucose-1-phosphate adenylyltransferase activity"/>
    <property type="evidence" value="ECO:0007669"/>
    <property type="project" value="UniProtKB-UniRule"/>
</dbReference>
<dbReference type="GO" id="GO:0005978">
    <property type="term" value="P:glycogen biosynthetic process"/>
    <property type="evidence" value="ECO:0007669"/>
    <property type="project" value="UniProtKB-UniRule"/>
</dbReference>
<dbReference type="CDD" id="cd02508">
    <property type="entry name" value="ADP_Glucose_PP"/>
    <property type="match status" value="1"/>
</dbReference>
<dbReference type="CDD" id="cd04651">
    <property type="entry name" value="LbH_G1P_AT_C"/>
    <property type="match status" value="1"/>
</dbReference>
<dbReference type="FunFam" id="2.160.10.10:FF:000006">
    <property type="entry name" value="Glucose-1-phosphate adenylyltransferase"/>
    <property type="match status" value="1"/>
</dbReference>
<dbReference type="FunFam" id="3.90.550.10:FF:000014">
    <property type="entry name" value="Glucose-1-phosphate adenylyltransferase"/>
    <property type="match status" value="1"/>
</dbReference>
<dbReference type="Gene3D" id="2.160.10.10">
    <property type="entry name" value="Hexapeptide repeat proteins"/>
    <property type="match status" value="1"/>
</dbReference>
<dbReference type="Gene3D" id="3.90.550.10">
    <property type="entry name" value="Spore Coat Polysaccharide Biosynthesis Protein SpsA, Chain A"/>
    <property type="match status" value="1"/>
</dbReference>
<dbReference type="HAMAP" id="MF_00624">
    <property type="entry name" value="GlgC"/>
    <property type="match status" value="1"/>
</dbReference>
<dbReference type="InterPro" id="IPR011831">
    <property type="entry name" value="ADP-Glc_PPase"/>
</dbReference>
<dbReference type="InterPro" id="IPR005836">
    <property type="entry name" value="ADP_Glu_pyroP_CS"/>
</dbReference>
<dbReference type="InterPro" id="IPR023049">
    <property type="entry name" value="GlgC_bac"/>
</dbReference>
<dbReference type="InterPro" id="IPR056818">
    <property type="entry name" value="GlmU/GlgC-like_hexapep"/>
</dbReference>
<dbReference type="InterPro" id="IPR005835">
    <property type="entry name" value="NTP_transferase_dom"/>
</dbReference>
<dbReference type="InterPro" id="IPR029044">
    <property type="entry name" value="Nucleotide-diphossugar_trans"/>
</dbReference>
<dbReference type="InterPro" id="IPR011004">
    <property type="entry name" value="Trimer_LpxA-like_sf"/>
</dbReference>
<dbReference type="NCBIfam" id="TIGR02091">
    <property type="entry name" value="glgC"/>
    <property type="match status" value="1"/>
</dbReference>
<dbReference type="NCBIfam" id="NF001947">
    <property type="entry name" value="PRK00725.1"/>
    <property type="match status" value="1"/>
</dbReference>
<dbReference type="NCBIfam" id="NF002023">
    <property type="entry name" value="PRK00844.1"/>
    <property type="match status" value="1"/>
</dbReference>
<dbReference type="PANTHER" id="PTHR43523:SF2">
    <property type="entry name" value="GLUCOSE-1-PHOSPHATE ADENYLYLTRANSFERASE"/>
    <property type="match status" value="1"/>
</dbReference>
<dbReference type="PANTHER" id="PTHR43523">
    <property type="entry name" value="GLUCOSE-1-PHOSPHATE ADENYLYLTRANSFERASE-RELATED"/>
    <property type="match status" value="1"/>
</dbReference>
<dbReference type="Pfam" id="PF24894">
    <property type="entry name" value="Hexapep_GlmU"/>
    <property type="match status" value="1"/>
</dbReference>
<dbReference type="Pfam" id="PF00483">
    <property type="entry name" value="NTP_transferase"/>
    <property type="match status" value="1"/>
</dbReference>
<dbReference type="SUPFAM" id="SSF53448">
    <property type="entry name" value="Nucleotide-diphospho-sugar transferases"/>
    <property type="match status" value="1"/>
</dbReference>
<dbReference type="SUPFAM" id="SSF51161">
    <property type="entry name" value="Trimeric LpxA-like enzymes"/>
    <property type="match status" value="1"/>
</dbReference>
<dbReference type="PROSITE" id="PS00808">
    <property type="entry name" value="ADP_GLC_PYROPHOSPH_1"/>
    <property type="match status" value="1"/>
</dbReference>
<dbReference type="PROSITE" id="PS00809">
    <property type="entry name" value="ADP_GLC_PYROPHOSPH_2"/>
    <property type="match status" value="1"/>
</dbReference>
<dbReference type="PROSITE" id="PS00810">
    <property type="entry name" value="ADP_GLC_PYROPHOSPH_3"/>
    <property type="match status" value="1"/>
</dbReference>
<reference key="1">
    <citation type="journal article" date="2009" name="PLoS Genet.">
        <title>Organised genome dynamics in the Escherichia coli species results in highly diverse adaptive paths.</title>
        <authorList>
            <person name="Touchon M."/>
            <person name="Hoede C."/>
            <person name="Tenaillon O."/>
            <person name="Barbe V."/>
            <person name="Baeriswyl S."/>
            <person name="Bidet P."/>
            <person name="Bingen E."/>
            <person name="Bonacorsi S."/>
            <person name="Bouchier C."/>
            <person name="Bouvet O."/>
            <person name="Calteau A."/>
            <person name="Chiapello H."/>
            <person name="Clermont O."/>
            <person name="Cruveiller S."/>
            <person name="Danchin A."/>
            <person name="Diard M."/>
            <person name="Dossat C."/>
            <person name="Karoui M.E."/>
            <person name="Frapy E."/>
            <person name="Garry L."/>
            <person name="Ghigo J.M."/>
            <person name="Gilles A.M."/>
            <person name="Johnson J."/>
            <person name="Le Bouguenec C."/>
            <person name="Lescat M."/>
            <person name="Mangenot S."/>
            <person name="Martinez-Jehanne V."/>
            <person name="Matic I."/>
            <person name="Nassif X."/>
            <person name="Oztas S."/>
            <person name="Petit M.A."/>
            <person name="Pichon C."/>
            <person name="Rouy Z."/>
            <person name="Ruf C.S."/>
            <person name="Schneider D."/>
            <person name="Tourret J."/>
            <person name="Vacherie B."/>
            <person name="Vallenet D."/>
            <person name="Medigue C."/>
            <person name="Rocha E.P.C."/>
            <person name="Denamur E."/>
        </authorList>
    </citation>
    <scope>NUCLEOTIDE SEQUENCE [LARGE SCALE GENOMIC DNA]</scope>
    <source>
        <strain>IAI1</strain>
    </source>
</reference>
<sequence length="431" mass="48698">MVSLEKNDHLMLARQLPLKSVALILAGGRGTRLKDLTNKRAKPAVHFGGKFRIIDFALSNCINSGIRRMGVITQYQSHTLVQHIQRGWSFFNEEMNEFVDLLPAQQRMKGENWYRGTADAVTQNLDIIRRYKAEYVVILAGDHIYKQDYSRMLIDHVEKGARCTVACMPVPIEEASAFGVMAVDENDKIIEFVEKPANPPSMPNDPSKSLASMGIYVFDADYLYELLEEDDRDENSSHDFGKDLIPKITEAGLAYAHPFPLSCVQSDPDAEPYWRDVGTLEAYWKANLDLASVVPELDMYDRNWPIRTYNESLPPAKFVQDRSGSHGMTLNSLVSGGCVISGSVVVQSVLFSRVRVNSFCNIDSAVLLPEVWVGRSCRLRRCVIDRACVIPEGMVIGENAEEDARRFYRSEEGIVLVTREMLRKLGHKQER</sequence>
<keyword id="KW-0021">Allosteric enzyme</keyword>
<keyword id="KW-0067">ATP-binding</keyword>
<keyword id="KW-0119">Carbohydrate metabolism</keyword>
<keyword id="KW-0320">Glycogen biosynthesis</keyword>
<keyword id="KW-0321">Glycogen metabolism</keyword>
<keyword id="KW-0547">Nucleotide-binding</keyword>
<keyword id="KW-0548">Nucleotidyltransferase</keyword>
<keyword id="KW-0808">Transferase</keyword>
<comment type="function">
    <text evidence="1">Involved in the biosynthesis of ADP-glucose, a building block required for the elongation reactions to produce glycogen. Catalyzes the reaction between ATP and alpha-D-glucose 1-phosphate (G1P) to produce pyrophosphate and ADP-Glc.</text>
</comment>
<comment type="catalytic activity">
    <reaction evidence="1">
        <text>alpha-D-glucose 1-phosphate + ATP + H(+) = ADP-alpha-D-glucose + diphosphate</text>
        <dbReference type="Rhea" id="RHEA:12120"/>
        <dbReference type="ChEBI" id="CHEBI:15378"/>
        <dbReference type="ChEBI" id="CHEBI:30616"/>
        <dbReference type="ChEBI" id="CHEBI:33019"/>
        <dbReference type="ChEBI" id="CHEBI:57498"/>
        <dbReference type="ChEBI" id="CHEBI:58601"/>
        <dbReference type="EC" id="2.7.7.27"/>
    </reaction>
</comment>
<comment type="activity regulation">
    <text evidence="1">Allosterically activated by fructose-1,6-bisphosphate (F16BP) and inhibited by AMP.</text>
</comment>
<comment type="pathway">
    <text evidence="1">Glycan biosynthesis; glycogen biosynthesis.</text>
</comment>
<comment type="subunit">
    <text evidence="1">Homotetramer.</text>
</comment>
<comment type="similarity">
    <text evidence="1">Belongs to the bacterial/plant glucose-1-phosphate adenylyltransferase family.</text>
</comment>
<name>GLGC_ECO8A</name>